<accession>Q5M5V4</accession>
<dbReference type="EMBL" id="CP000023">
    <property type="protein sequence ID" value="AAV60065.1"/>
    <property type="molecule type" value="Genomic_DNA"/>
</dbReference>
<dbReference type="RefSeq" id="WP_002949692.1">
    <property type="nucleotide sequence ID" value="NC_006448.1"/>
</dbReference>
<dbReference type="SMR" id="Q5M5V4"/>
<dbReference type="STRING" id="264199.stu0345"/>
<dbReference type="GeneID" id="66898262"/>
<dbReference type="KEGG" id="stl:stu0345"/>
<dbReference type="eggNOG" id="COG0858">
    <property type="taxonomic scope" value="Bacteria"/>
</dbReference>
<dbReference type="HOGENOM" id="CLU_089475_3_0_9"/>
<dbReference type="Proteomes" id="UP000001170">
    <property type="component" value="Chromosome"/>
</dbReference>
<dbReference type="GO" id="GO:0005829">
    <property type="term" value="C:cytosol"/>
    <property type="evidence" value="ECO:0007669"/>
    <property type="project" value="TreeGrafter"/>
</dbReference>
<dbReference type="GO" id="GO:0043024">
    <property type="term" value="F:ribosomal small subunit binding"/>
    <property type="evidence" value="ECO:0007669"/>
    <property type="project" value="TreeGrafter"/>
</dbReference>
<dbReference type="GO" id="GO:0030490">
    <property type="term" value="P:maturation of SSU-rRNA"/>
    <property type="evidence" value="ECO:0007669"/>
    <property type="project" value="UniProtKB-UniRule"/>
</dbReference>
<dbReference type="Gene3D" id="3.30.300.20">
    <property type="match status" value="1"/>
</dbReference>
<dbReference type="HAMAP" id="MF_00003">
    <property type="entry name" value="RbfA"/>
    <property type="match status" value="1"/>
</dbReference>
<dbReference type="InterPro" id="IPR015946">
    <property type="entry name" value="KH_dom-like_a/b"/>
</dbReference>
<dbReference type="InterPro" id="IPR000238">
    <property type="entry name" value="RbfA"/>
</dbReference>
<dbReference type="InterPro" id="IPR023799">
    <property type="entry name" value="RbfA_dom_sf"/>
</dbReference>
<dbReference type="InterPro" id="IPR020053">
    <property type="entry name" value="Ribosome-bd_factorA_CS"/>
</dbReference>
<dbReference type="NCBIfam" id="TIGR00082">
    <property type="entry name" value="rbfA"/>
    <property type="match status" value="1"/>
</dbReference>
<dbReference type="PANTHER" id="PTHR33515">
    <property type="entry name" value="RIBOSOME-BINDING FACTOR A, CHLOROPLASTIC-RELATED"/>
    <property type="match status" value="1"/>
</dbReference>
<dbReference type="PANTHER" id="PTHR33515:SF1">
    <property type="entry name" value="RIBOSOME-BINDING FACTOR A, CHLOROPLASTIC-RELATED"/>
    <property type="match status" value="1"/>
</dbReference>
<dbReference type="Pfam" id="PF02033">
    <property type="entry name" value="RBFA"/>
    <property type="match status" value="1"/>
</dbReference>
<dbReference type="SUPFAM" id="SSF89919">
    <property type="entry name" value="Ribosome-binding factor A, RbfA"/>
    <property type="match status" value="1"/>
</dbReference>
<dbReference type="PROSITE" id="PS01319">
    <property type="entry name" value="RBFA"/>
    <property type="match status" value="1"/>
</dbReference>
<evidence type="ECO:0000255" key="1">
    <source>
        <dbReference type="HAMAP-Rule" id="MF_00003"/>
    </source>
</evidence>
<feature type="chain" id="PRO_0000102752" description="Ribosome-binding factor A">
    <location>
        <begin position="1"/>
        <end position="117"/>
    </location>
</feature>
<keyword id="KW-0963">Cytoplasm</keyword>
<keyword id="KW-1185">Reference proteome</keyword>
<keyword id="KW-0690">Ribosome biogenesis</keyword>
<gene>
    <name evidence="1" type="primary">rbfA</name>
    <name type="ordered locus">stu0345</name>
</gene>
<proteinExistence type="inferred from homology"/>
<organism>
    <name type="scientific">Streptococcus thermophilus (strain ATCC BAA-250 / LMG 18311)</name>
    <dbReference type="NCBI Taxonomy" id="264199"/>
    <lineage>
        <taxon>Bacteria</taxon>
        <taxon>Bacillati</taxon>
        <taxon>Bacillota</taxon>
        <taxon>Bacilli</taxon>
        <taxon>Lactobacillales</taxon>
        <taxon>Streptococcaceae</taxon>
        <taxon>Streptococcus</taxon>
    </lineage>
</organism>
<protein>
    <recommendedName>
        <fullName evidence="1">Ribosome-binding factor A</fullName>
    </recommendedName>
</protein>
<sequence>MGNSFRVDRVGMEIKREVNEILQKKVRDPRVQNVTITDVQMLGDLSAAKVFYTIHSTLASDNQKAQTGLEKATGTIKRELGKNLTMYKIPDLIFIKDESIEYGNKIDEMLRNLERKD</sequence>
<comment type="function">
    <text evidence="1">One of several proteins that assist in the late maturation steps of the functional core of the 30S ribosomal subunit. Associates with free 30S ribosomal subunits (but not with 30S subunits that are part of 70S ribosomes or polysomes). Required for efficient processing of 16S rRNA. May interact with the 5'-terminal helix region of 16S rRNA.</text>
</comment>
<comment type="subunit">
    <text evidence="1">Monomer. Binds 30S ribosomal subunits, but not 50S ribosomal subunits or 70S ribosomes.</text>
</comment>
<comment type="subcellular location">
    <subcellularLocation>
        <location evidence="1">Cytoplasm</location>
    </subcellularLocation>
</comment>
<comment type="similarity">
    <text evidence="1">Belongs to the RbfA family.</text>
</comment>
<name>RBFA_STRT2</name>
<reference key="1">
    <citation type="journal article" date="2004" name="Nat. Biotechnol.">
        <title>Complete sequence and comparative genome analysis of the dairy bacterium Streptococcus thermophilus.</title>
        <authorList>
            <person name="Bolotin A."/>
            <person name="Quinquis B."/>
            <person name="Renault P."/>
            <person name="Sorokin A."/>
            <person name="Ehrlich S.D."/>
            <person name="Kulakauskas S."/>
            <person name="Lapidus A."/>
            <person name="Goltsman E."/>
            <person name="Mazur M."/>
            <person name="Pusch G.D."/>
            <person name="Fonstein M."/>
            <person name="Overbeek R."/>
            <person name="Kyprides N."/>
            <person name="Purnelle B."/>
            <person name="Prozzi D."/>
            <person name="Ngui K."/>
            <person name="Masuy D."/>
            <person name="Hancy F."/>
            <person name="Burteau S."/>
            <person name="Boutry M."/>
            <person name="Delcour J."/>
            <person name="Goffeau A."/>
            <person name="Hols P."/>
        </authorList>
    </citation>
    <scope>NUCLEOTIDE SEQUENCE [LARGE SCALE GENOMIC DNA]</scope>
    <source>
        <strain>ATCC BAA-250 / LMG 18311</strain>
    </source>
</reference>